<accession>B2U823</accession>
<keyword id="KW-0687">Ribonucleoprotein</keyword>
<keyword id="KW-0689">Ribosomal protein</keyword>
<protein>
    <recommendedName>
        <fullName evidence="1">Large ribosomal subunit protein bL34</fullName>
    </recommendedName>
    <alternativeName>
        <fullName evidence="2">50S ribosomal protein L34</fullName>
    </alternativeName>
</protein>
<evidence type="ECO:0000255" key="1">
    <source>
        <dbReference type="HAMAP-Rule" id="MF_00391"/>
    </source>
</evidence>
<evidence type="ECO:0000305" key="2"/>
<sequence>MKRTYQPSVTRRKRTHGFRVRMKTRGGRAVLNARRAKGRKRLAI</sequence>
<name>RL34_RALPJ</name>
<comment type="similarity">
    <text evidence="1">Belongs to the bacterial ribosomal protein bL34 family.</text>
</comment>
<proteinExistence type="inferred from homology"/>
<dbReference type="EMBL" id="CP001068">
    <property type="protein sequence ID" value="ACD28876.1"/>
    <property type="molecule type" value="Genomic_DNA"/>
</dbReference>
<dbReference type="SMR" id="B2U823"/>
<dbReference type="STRING" id="402626.Rpic_3760"/>
<dbReference type="KEGG" id="rpi:Rpic_3760"/>
<dbReference type="eggNOG" id="COG0230">
    <property type="taxonomic scope" value="Bacteria"/>
</dbReference>
<dbReference type="HOGENOM" id="CLU_129938_2_0_4"/>
<dbReference type="GO" id="GO:1990904">
    <property type="term" value="C:ribonucleoprotein complex"/>
    <property type="evidence" value="ECO:0007669"/>
    <property type="project" value="UniProtKB-KW"/>
</dbReference>
<dbReference type="GO" id="GO:0005840">
    <property type="term" value="C:ribosome"/>
    <property type="evidence" value="ECO:0007669"/>
    <property type="project" value="UniProtKB-KW"/>
</dbReference>
<dbReference type="GO" id="GO:0003735">
    <property type="term" value="F:structural constituent of ribosome"/>
    <property type="evidence" value="ECO:0007669"/>
    <property type="project" value="InterPro"/>
</dbReference>
<dbReference type="GO" id="GO:0006412">
    <property type="term" value="P:translation"/>
    <property type="evidence" value="ECO:0007669"/>
    <property type="project" value="UniProtKB-UniRule"/>
</dbReference>
<dbReference type="FunFam" id="1.10.287.3980:FF:000001">
    <property type="entry name" value="Mitochondrial ribosomal protein L34"/>
    <property type="match status" value="1"/>
</dbReference>
<dbReference type="Gene3D" id="1.10.287.3980">
    <property type="match status" value="1"/>
</dbReference>
<dbReference type="HAMAP" id="MF_00391">
    <property type="entry name" value="Ribosomal_bL34"/>
    <property type="match status" value="1"/>
</dbReference>
<dbReference type="InterPro" id="IPR000271">
    <property type="entry name" value="Ribosomal_bL34"/>
</dbReference>
<dbReference type="InterPro" id="IPR020939">
    <property type="entry name" value="Ribosomal_bL34_CS"/>
</dbReference>
<dbReference type="NCBIfam" id="TIGR01030">
    <property type="entry name" value="rpmH_bact"/>
    <property type="match status" value="1"/>
</dbReference>
<dbReference type="PANTHER" id="PTHR14503:SF4">
    <property type="entry name" value="LARGE RIBOSOMAL SUBUNIT PROTEIN BL34M"/>
    <property type="match status" value="1"/>
</dbReference>
<dbReference type="PANTHER" id="PTHR14503">
    <property type="entry name" value="MITOCHONDRIAL RIBOSOMAL PROTEIN 34 FAMILY MEMBER"/>
    <property type="match status" value="1"/>
</dbReference>
<dbReference type="Pfam" id="PF00468">
    <property type="entry name" value="Ribosomal_L34"/>
    <property type="match status" value="1"/>
</dbReference>
<dbReference type="PROSITE" id="PS00784">
    <property type="entry name" value="RIBOSOMAL_L34"/>
    <property type="match status" value="1"/>
</dbReference>
<feature type="chain" id="PRO_1000196091" description="Large ribosomal subunit protein bL34">
    <location>
        <begin position="1"/>
        <end position="44"/>
    </location>
</feature>
<organism>
    <name type="scientific">Ralstonia pickettii (strain 12J)</name>
    <dbReference type="NCBI Taxonomy" id="402626"/>
    <lineage>
        <taxon>Bacteria</taxon>
        <taxon>Pseudomonadati</taxon>
        <taxon>Pseudomonadota</taxon>
        <taxon>Betaproteobacteria</taxon>
        <taxon>Burkholderiales</taxon>
        <taxon>Burkholderiaceae</taxon>
        <taxon>Ralstonia</taxon>
    </lineage>
</organism>
<reference key="1">
    <citation type="submission" date="2008-05" db="EMBL/GenBank/DDBJ databases">
        <title>Complete sequence of chromosome 1 of Ralstonia pickettii 12J.</title>
        <authorList>
            <person name="Lucas S."/>
            <person name="Copeland A."/>
            <person name="Lapidus A."/>
            <person name="Glavina del Rio T."/>
            <person name="Dalin E."/>
            <person name="Tice H."/>
            <person name="Bruce D."/>
            <person name="Goodwin L."/>
            <person name="Pitluck S."/>
            <person name="Meincke L."/>
            <person name="Brettin T."/>
            <person name="Detter J.C."/>
            <person name="Han C."/>
            <person name="Kuske C.R."/>
            <person name="Schmutz J."/>
            <person name="Larimer F."/>
            <person name="Land M."/>
            <person name="Hauser L."/>
            <person name="Kyrpides N."/>
            <person name="Mikhailova N."/>
            <person name="Marsh T."/>
            <person name="Richardson P."/>
        </authorList>
    </citation>
    <scope>NUCLEOTIDE SEQUENCE [LARGE SCALE GENOMIC DNA]</scope>
    <source>
        <strain>12J</strain>
    </source>
</reference>
<gene>
    <name evidence="1" type="primary">rpmH</name>
    <name type="ordered locus">Rpic_3760</name>
</gene>